<protein>
    <recommendedName>
        <fullName evidence="1">L-aspartate oxidase</fullName>
        <shortName evidence="1">LASPO</shortName>
        <ecNumber evidence="1">1.4.3.16</ecNumber>
    </recommendedName>
    <alternativeName>
        <fullName>Quinolinate synthase B</fullName>
    </alternativeName>
</protein>
<sequence>MSQHYQHDVLVIGSGAAGLSLALTLPEHLRIAVLSKGELSQGSTYWAQGGVAAVLDDTDTVESHVEDTLVAGGGLCREDAVRFTVEHSREAIQWLIEQGVPFTRDEQHNHEEGSFEYHLTREGGHSHRRIIHAADATGAAIFNTLLAQARRRPNIELLSQRVAVDLITERKLGLPSKRCLGAYVLNRESGEVDTFRARFSVLASGGASKVYLYTSNPDGNSGDGIAMAWRAGCRVGNLEFNQFHPTCLYHPQAKSFLITEALRGEGALLRLPNGERFMPRFDPRGELAPRDIVARAIDHEMKRLGIDCVYLDISHKPAEFIKAHFPTVYERCLDFGIDITQQPIPVVPAAHYTCGGVLVDQHGHTDVPGLYAIGETTFTGLHGANRMASNSLLECFVYARSAAADMLQRLPGTPVPESLPSWDASQVTDSDEDVIIAHNWDELRRFMWDYVGIVRTNKRLQRAQHRVRLLLSEIDEFYSNYKVSRDLIELRNLALVAELIIRSAMQRRESRGLHYTLDYPDLLPEARDTILVPPIYGD</sequence>
<name>NADB_PSEAE</name>
<gene>
    <name type="primary">nadB</name>
    <name type="ordered locus">PA0761</name>
</gene>
<accession>Q51363</accession>
<accession>Q51412</accession>
<comment type="function">
    <text evidence="1">Catalyzes the oxidation of L-aspartate to iminoaspartate, the first step in the de novo biosynthesis of NAD(+).</text>
</comment>
<comment type="catalytic activity">
    <reaction evidence="1">
        <text>L-aspartate + O2 = iminosuccinate + H2O2</text>
        <dbReference type="Rhea" id="RHEA:25876"/>
        <dbReference type="ChEBI" id="CHEBI:15379"/>
        <dbReference type="ChEBI" id="CHEBI:16240"/>
        <dbReference type="ChEBI" id="CHEBI:29991"/>
        <dbReference type="ChEBI" id="CHEBI:77875"/>
        <dbReference type="EC" id="1.4.3.16"/>
    </reaction>
    <physiologicalReaction direction="left-to-right" evidence="1">
        <dbReference type="Rhea" id="RHEA:25877"/>
    </physiologicalReaction>
</comment>
<comment type="cofactor">
    <cofactor evidence="1">
        <name>FAD</name>
        <dbReference type="ChEBI" id="CHEBI:57692"/>
    </cofactor>
    <text evidence="1">Binds 1 FAD per subunit.</text>
</comment>
<comment type="pathway">
    <text evidence="1">Cofactor biosynthesis; NAD(+) biosynthesis; iminoaspartate from L-aspartate (oxidase route): step 1/1.</text>
</comment>
<comment type="subcellular location">
    <subcellularLocation>
        <location evidence="1">Cytoplasm</location>
    </subcellularLocation>
</comment>
<comment type="similarity">
    <text evidence="2">Belongs to the FAD-dependent oxidoreductase 2 family. NadB subfamily.</text>
</comment>
<feature type="chain" id="PRO_0000184393" description="L-aspartate oxidase">
    <location>
        <begin position="1"/>
        <end position="538"/>
    </location>
</feature>
<feature type="active site" description="Proton donor/acceptor" evidence="1">
    <location>
        <position position="290"/>
    </location>
</feature>
<feature type="binding site" evidence="1">
    <location>
        <begin position="14"/>
        <end position="17"/>
    </location>
    <ligand>
        <name>FAD</name>
        <dbReference type="ChEBI" id="CHEBI:57692"/>
    </ligand>
</feature>
<feature type="binding site" evidence="1">
    <location>
        <position position="36"/>
    </location>
    <ligand>
        <name>FAD</name>
        <dbReference type="ChEBI" id="CHEBI:57692"/>
    </ligand>
</feature>
<feature type="binding site" evidence="1">
    <location>
        <begin position="43"/>
        <end position="50"/>
    </location>
    <ligand>
        <name>FAD</name>
        <dbReference type="ChEBI" id="CHEBI:57692"/>
    </ligand>
</feature>
<feature type="binding site" evidence="1">
    <location>
        <position position="223"/>
    </location>
    <ligand>
        <name>FAD</name>
        <dbReference type="ChEBI" id="CHEBI:57692"/>
    </ligand>
</feature>
<feature type="binding site" evidence="1">
    <location>
        <position position="375"/>
    </location>
    <ligand>
        <name>FAD</name>
        <dbReference type="ChEBI" id="CHEBI:57692"/>
    </ligand>
</feature>
<feature type="binding site" evidence="1">
    <location>
        <begin position="391"/>
        <end position="392"/>
    </location>
    <ligand>
        <name>FAD</name>
        <dbReference type="ChEBI" id="CHEBI:57692"/>
    </ligand>
</feature>
<feature type="site" description="Important in orienting the L-aspartate substrate" evidence="1">
    <location>
        <position position="122"/>
    </location>
</feature>
<proteinExistence type="inferred from homology"/>
<evidence type="ECO:0000250" key="1">
    <source>
        <dbReference type="UniProtKB" id="P10902"/>
    </source>
</evidence>
<evidence type="ECO:0000305" key="2"/>
<dbReference type="EC" id="1.4.3.16" evidence="1"/>
<dbReference type="EMBL" id="U17232">
    <property type="protein sequence ID" value="AAA92356.1"/>
    <property type="molecule type" value="Genomic_DNA"/>
</dbReference>
<dbReference type="EMBL" id="AE004091">
    <property type="protein sequence ID" value="AAG04150.1"/>
    <property type="molecule type" value="Genomic_DNA"/>
</dbReference>
<dbReference type="EMBL" id="L36379">
    <property type="protein sequence ID" value="AAA64438.1"/>
    <property type="molecule type" value="Genomic_DNA"/>
</dbReference>
<dbReference type="PIR" id="T46863">
    <property type="entry name" value="T46863"/>
</dbReference>
<dbReference type="RefSeq" id="NP_249452.1">
    <property type="nucleotide sequence ID" value="NC_002516.2"/>
</dbReference>
<dbReference type="RefSeq" id="WP_003114182.1">
    <property type="nucleotide sequence ID" value="NZ_QZGE01000007.1"/>
</dbReference>
<dbReference type="SMR" id="Q51363"/>
<dbReference type="FunCoup" id="Q51363">
    <property type="interactions" value="537"/>
</dbReference>
<dbReference type="STRING" id="208964.PA0761"/>
<dbReference type="PaxDb" id="208964-PA0761"/>
<dbReference type="GeneID" id="882067"/>
<dbReference type="KEGG" id="pae:PA0761"/>
<dbReference type="PATRIC" id="fig|208964.12.peg.791"/>
<dbReference type="PseudoCAP" id="PA0761"/>
<dbReference type="HOGENOM" id="CLU_014312_3_0_6"/>
<dbReference type="InParanoid" id="Q51363"/>
<dbReference type="OrthoDB" id="9806724at2"/>
<dbReference type="PhylomeDB" id="Q51363"/>
<dbReference type="BioCyc" id="PAER208964:G1FZ6-774-MONOMER"/>
<dbReference type="UniPathway" id="UPA00253">
    <property type="reaction ID" value="UER00326"/>
</dbReference>
<dbReference type="Proteomes" id="UP000002438">
    <property type="component" value="Chromosome"/>
</dbReference>
<dbReference type="GO" id="GO:0005737">
    <property type="term" value="C:cytoplasm"/>
    <property type="evidence" value="ECO:0007669"/>
    <property type="project" value="UniProtKB-SubCell"/>
</dbReference>
<dbReference type="GO" id="GO:0008734">
    <property type="term" value="F:L-aspartate oxidase activity"/>
    <property type="evidence" value="ECO:0000318"/>
    <property type="project" value="GO_Central"/>
</dbReference>
<dbReference type="GO" id="GO:0000166">
    <property type="term" value="F:nucleotide binding"/>
    <property type="evidence" value="ECO:0007669"/>
    <property type="project" value="UniProtKB-KW"/>
</dbReference>
<dbReference type="GO" id="GO:0034628">
    <property type="term" value="P:'de novo' NAD biosynthetic process from L-aspartate"/>
    <property type="evidence" value="ECO:0000318"/>
    <property type="project" value="GO_Central"/>
</dbReference>
<dbReference type="FunFam" id="1.20.58.100:FF:000002">
    <property type="entry name" value="L-aspartate oxidase"/>
    <property type="match status" value="1"/>
</dbReference>
<dbReference type="FunFam" id="3.50.50.60:FF:000060">
    <property type="entry name" value="L-aspartate oxidase"/>
    <property type="match status" value="1"/>
</dbReference>
<dbReference type="FunFam" id="3.90.700.10:FF:000002">
    <property type="entry name" value="L-aspartate oxidase"/>
    <property type="match status" value="1"/>
</dbReference>
<dbReference type="Gene3D" id="3.50.50.60">
    <property type="entry name" value="FAD/NAD(P)-binding domain"/>
    <property type="match status" value="1"/>
</dbReference>
<dbReference type="Gene3D" id="1.20.58.100">
    <property type="entry name" value="Fumarate reductase/succinate dehydrogenase flavoprotein-like, C-terminal domain"/>
    <property type="match status" value="1"/>
</dbReference>
<dbReference type="Gene3D" id="3.90.700.10">
    <property type="entry name" value="Succinate dehydrogenase/fumarate reductase flavoprotein, catalytic domain"/>
    <property type="match status" value="1"/>
</dbReference>
<dbReference type="InterPro" id="IPR003953">
    <property type="entry name" value="FAD-dep_OxRdtase_2_FAD-bd"/>
</dbReference>
<dbReference type="InterPro" id="IPR036188">
    <property type="entry name" value="FAD/NAD-bd_sf"/>
</dbReference>
<dbReference type="InterPro" id="IPR037099">
    <property type="entry name" value="Fum_R/Succ_DH_flav-like_C_sf"/>
</dbReference>
<dbReference type="InterPro" id="IPR015939">
    <property type="entry name" value="Fum_Rdtase/Succ_DH_flav-like_C"/>
</dbReference>
<dbReference type="InterPro" id="IPR005288">
    <property type="entry name" value="NadB"/>
</dbReference>
<dbReference type="InterPro" id="IPR027477">
    <property type="entry name" value="Succ_DH/fumarate_Rdtase_cat_sf"/>
</dbReference>
<dbReference type="NCBIfam" id="TIGR00551">
    <property type="entry name" value="nadB"/>
    <property type="match status" value="1"/>
</dbReference>
<dbReference type="NCBIfam" id="NF006567">
    <property type="entry name" value="PRK09077.1"/>
    <property type="match status" value="1"/>
</dbReference>
<dbReference type="PANTHER" id="PTHR42716">
    <property type="entry name" value="L-ASPARTATE OXIDASE"/>
    <property type="match status" value="1"/>
</dbReference>
<dbReference type="PANTHER" id="PTHR42716:SF2">
    <property type="entry name" value="L-ASPARTATE OXIDASE, CHLOROPLASTIC"/>
    <property type="match status" value="1"/>
</dbReference>
<dbReference type="Pfam" id="PF00890">
    <property type="entry name" value="FAD_binding_2"/>
    <property type="match status" value="1"/>
</dbReference>
<dbReference type="Pfam" id="PF02910">
    <property type="entry name" value="Succ_DH_flav_C"/>
    <property type="match status" value="1"/>
</dbReference>
<dbReference type="PIRSF" id="PIRSF000171">
    <property type="entry name" value="SDHA_APRA_LASPO"/>
    <property type="match status" value="1"/>
</dbReference>
<dbReference type="PRINTS" id="PR00368">
    <property type="entry name" value="FADPNR"/>
</dbReference>
<dbReference type="SUPFAM" id="SSF51905">
    <property type="entry name" value="FAD/NAD(P)-binding domain"/>
    <property type="match status" value="1"/>
</dbReference>
<dbReference type="SUPFAM" id="SSF46977">
    <property type="entry name" value="Succinate dehydrogenase/fumarate reductase flavoprotein C-terminal domain"/>
    <property type="match status" value="1"/>
</dbReference>
<dbReference type="SUPFAM" id="SSF56425">
    <property type="entry name" value="Succinate dehydrogenase/fumarate reductase flavoprotein, catalytic domain"/>
    <property type="match status" value="1"/>
</dbReference>
<reference key="1">
    <citation type="journal article" date="1995" name="Gene">
        <title>Genetic linkage in Pseudomonas aeruginosa of algT and nadB: mutation in nadB does not affect NAD biosynthesis or alginate production.</title>
        <authorList>
            <person name="DeVries C.A."/>
            <person name="Hassett D.J."/>
            <person name="Flynn J.L."/>
            <person name="Ohman D.E."/>
        </authorList>
    </citation>
    <scope>NUCLEOTIDE SEQUENCE [GENOMIC DNA]</scope>
    <source>
        <strain>FRD1</strain>
    </source>
</reference>
<reference key="2">
    <citation type="journal article" date="2000" name="Nature">
        <title>Complete genome sequence of Pseudomonas aeruginosa PAO1, an opportunistic pathogen.</title>
        <authorList>
            <person name="Stover C.K."/>
            <person name="Pham X.-Q.T."/>
            <person name="Erwin A.L."/>
            <person name="Mizoguchi S.D."/>
            <person name="Warrener P."/>
            <person name="Hickey M.J."/>
            <person name="Brinkman F.S.L."/>
            <person name="Hufnagle W.O."/>
            <person name="Kowalik D.J."/>
            <person name="Lagrou M."/>
            <person name="Garber R.L."/>
            <person name="Goltry L."/>
            <person name="Tolentino E."/>
            <person name="Westbrock-Wadman S."/>
            <person name="Yuan Y."/>
            <person name="Brody L.L."/>
            <person name="Coulter S.N."/>
            <person name="Folger K.R."/>
            <person name="Kas A."/>
            <person name="Larbig K."/>
            <person name="Lim R.M."/>
            <person name="Smith K.A."/>
            <person name="Spencer D.H."/>
            <person name="Wong G.K.-S."/>
            <person name="Wu Z."/>
            <person name="Paulsen I.T."/>
            <person name="Reizer J."/>
            <person name="Saier M.H. Jr."/>
            <person name="Hancock R.E.W."/>
            <person name="Lory S."/>
            <person name="Olson M.V."/>
        </authorList>
    </citation>
    <scope>NUCLEOTIDE SEQUENCE [LARGE SCALE GENOMIC DNA]</scope>
    <source>
        <strain>ATCC 15692 / DSM 22644 / CIP 104116 / JCM 14847 / LMG 12228 / 1C / PRS 101 / PAO1</strain>
    </source>
</reference>
<reference key="3">
    <citation type="journal article" date="1994" name="J. Bacteriol.">
        <title>Mucoid-to-nonmucoid conversion in alginate-producing Pseudomonas aeruginosa often results from spontaneous mutations in algT, encoding a putative alternate sigma factor, and shows evidence for autoregulation.</title>
        <authorList>
            <person name="Devries C.A."/>
            <person name="Ohman D.E."/>
        </authorList>
    </citation>
    <scope>NUCLEOTIDE SEQUENCE [GENOMIC DNA] OF 1-31</scope>
    <source>
        <strain>FRD1</strain>
    </source>
</reference>
<keyword id="KW-0963">Cytoplasm</keyword>
<keyword id="KW-0274">FAD</keyword>
<keyword id="KW-0285">Flavoprotein</keyword>
<keyword id="KW-0547">Nucleotide-binding</keyword>
<keyword id="KW-0560">Oxidoreductase</keyword>
<keyword id="KW-0662">Pyridine nucleotide biosynthesis</keyword>
<keyword id="KW-1185">Reference proteome</keyword>
<organism>
    <name type="scientific">Pseudomonas aeruginosa (strain ATCC 15692 / DSM 22644 / CIP 104116 / JCM 14847 / LMG 12228 / 1C / PRS 101 / PAO1)</name>
    <dbReference type="NCBI Taxonomy" id="208964"/>
    <lineage>
        <taxon>Bacteria</taxon>
        <taxon>Pseudomonadati</taxon>
        <taxon>Pseudomonadota</taxon>
        <taxon>Gammaproteobacteria</taxon>
        <taxon>Pseudomonadales</taxon>
        <taxon>Pseudomonadaceae</taxon>
        <taxon>Pseudomonas</taxon>
    </lineage>
</organism>